<keyword id="KW-1185">Reference proteome</keyword>
<keyword id="KW-0687">Ribonucleoprotein</keyword>
<keyword id="KW-0689">Ribosomal protein</keyword>
<proteinExistence type="inferred from homology"/>
<protein>
    <recommendedName>
        <fullName evidence="1">Large ribosomal subunit protein uL30</fullName>
    </recommendedName>
    <alternativeName>
        <fullName evidence="2">50S ribosomal protein L30</fullName>
    </alternativeName>
</protein>
<sequence>MAQKQIKVTLVRSVIGTKQSHRDTIRGLGLRRINSSRVLVDTPEVRGMIHKVGYLVSVSEA</sequence>
<name>RL30_BORPE</name>
<feature type="chain" id="PRO_0000273752" description="Large ribosomal subunit protein uL30">
    <location>
        <begin position="1"/>
        <end position="61"/>
    </location>
</feature>
<dbReference type="EMBL" id="BX640422">
    <property type="protein sequence ID" value="CAE43891.1"/>
    <property type="molecule type" value="Genomic_DNA"/>
</dbReference>
<dbReference type="RefSeq" id="NP_882143.1">
    <property type="nucleotide sequence ID" value="NC_002929.2"/>
</dbReference>
<dbReference type="RefSeq" id="WP_003806924.1">
    <property type="nucleotide sequence ID" value="NZ_CP039022.1"/>
</dbReference>
<dbReference type="SMR" id="Q7VTB3"/>
<dbReference type="STRING" id="257313.BP3634"/>
<dbReference type="PaxDb" id="257313-BP3634"/>
<dbReference type="GeneID" id="93206279"/>
<dbReference type="KEGG" id="bpe:BP3634"/>
<dbReference type="PATRIC" id="fig|257313.5.peg.3931"/>
<dbReference type="eggNOG" id="COG1841">
    <property type="taxonomic scope" value="Bacteria"/>
</dbReference>
<dbReference type="HOGENOM" id="CLU_131047_2_1_4"/>
<dbReference type="Proteomes" id="UP000002676">
    <property type="component" value="Chromosome"/>
</dbReference>
<dbReference type="GO" id="GO:0022625">
    <property type="term" value="C:cytosolic large ribosomal subunit"/>
    <property type="evidence" value="ECO:0007669"/>
    <property type="project" value="TreeGrafter"/>
</dbReference>
<dbReference type="GO" id="GO:0003735">
    <property type="term" value="F:structural constituent of ribosome"/>
    <property type="evidence" value="ECO:0007669"/>
    <property type="project" value="InterPro"/>
</dbReference>
<dbReference type="GO" id="GO:0006412">
    <property type="term" value="P:translation"/>
    <property type="evidence" value="ECO:0007669"/>
    <property type="project" value="UniProtKB-UniRule"/>
</dbReference>
<dbReference type="CDD" id="cd01658">
    <property type="entry name" value="Ribosomal_L30"/>
    <property type="match status" value="1"/>
</dbReference>
<dbReference type="FunFam" id="3.30.1390.20:FF:000001">
    <property type="entry name" value="50S ribosomal protein L30"/>
    <property type="match status" value="1"/>
</dbReference>
<dbReference type="Gene3D" id="3.30.1390.20">
    <property type="entry name" value="Ribosomal protein L30, ferredoxin-like fold domain"/>
    <property type="match status" value="1"/>
</dbReference>
<dbReference type="HAMAP" id="MF_01371_B">
    <property type="entry name" value="Ribosomal_uL30_B"/>
    <property type="match status" value="1"/>
</dbReference>
<dbReference type="InterPro" id="IPR036919">
    <property type="entry name" value="Ribo_uL30_ferredoxin-like_sf"/>
</dbReference>
<dbReference type="InterPro" id="IPR005996">
    <property type="entry name" value="Ribosomal_uL30_bac-type"/>
</dbReference>
<dbReference type="InterPro" id="IPR018038">
    <property type="entry name" value="Ribosomal_uL30_CS"/>
</dbReference>
<dbReference type="InterPro" id="IPR016082">
    <property type="entry name" value="Ribosomal_uL30_ferredoxin-like"/>
</dbReference>
<dbReference type="NCBIfam" id="TIGR01308">
    <property type="entry name" value="rpmD_bact"/>
    <property type="match status" value="1"/>
</dbReference>
<dbReference type="PANTHER" id="PTHR15892:SF2">
    <property type="entry name" value="LARGE RIBOSOMAL SUBUNIT PROTEIN UL30M"/>
    <property type="match status" value="1"/>
</dbReference>
<dbReference type="PANTHER" id="PTHR15892">
    <property type="entry name" value="MITOCHONDRIAL RIBOSOMAL PROTEIN L30"/>
    <property type="match status" value="1"/>
</dbReference>
<dbReference type="Pfam" id="PF00327">
    <property type="entry name" value="Ribosomal_L30"/>
    <property type="match status" value="1"/>
</dbReference>
<dbReference type="PIRSF" id="PIRSF002211">
    <property type="entry name" value="Ribosomal_L30_bac-type"/>
    <property type="match status" value="1"/>
</dbReference>
<dbReference type="SUPFAM" id="SSF55129">
    <property type="entry name" value="Ribosomal protein L30p/L7e"/>
    <property type="match status" value="1"/>
</dbReference>
<dbReference type="PROSITE" id="PS00634">
    <property type="entry name" value="RIBOSOMAL_L30"/>
    <property type="match status" value="1"/>
</dbReference>
<evidence type="ECO:0000255" key="1">
    <source>
        <dbReference type="HAMAP-Rule" id="MF_01371"/>
    </source>
</evidence>
<evidence type="ECO:0000305" key="2"/>
<reference key="1">
    <citation type="journal article" date="2003" name="Nat. Genet.">
        <title>Comparative analysis of the genome sequences of Bordetella pertussis, Bordetella parapertussis and Bordetella bronchiseptica.</title>
        <authorList>
            <person name="Parkhill J."/>
            <person name="Sebaihia M."/>
            <person name="Preston A."/>
            <person name="Murphy L.D."/>
            <person name="Thomson N.R."/>
            <person name="Harris D.E."/>
            <person name="Holden M.T.G."/>
            <person name="Churcher C.M."/>
            <person name="Bentley S.D."/>
            <person name="Mungall K.L."/>
            <person name="Cerdeno-Tarraga A.-M."/>
            <person name="Temple L."/>
            <person name="James K.D."/>
            <person name="Harris B."/>
            <person name="Quail M.A."/>
            <person name="Achtman M."/>
            <person name="Atkin R."/>
            <person name="Baker S."/>
            <person name="Basham D."/>
            <person name="Bason N."/>
            <person name="Cherevach I."/>
            <person name="Chillingworth T."/>
            <person name="Collins M."/>
            <person name="Cronin A."/>
            <person name="Davis P."/>
            <person name="Doggett J."/>
            <person name="Feltwell T."/>
            <person name="Goble A."/>
            <person name="Hamlin N."/>
            <person name="Hauser H."/>
            <person name="Holroyd S."/>
            <person name="Jagels K."/>
            <person name="Leather S."/>
            <person name="Moule S."/>
            <person name="Norberczak H."/>
            <person name="O'Neil S."/>
            <person name="Ormond D."/>
            <person name="Price C."/>
            <person name="Rabbinowitsch E."/>
            <person name="Rutter S."/>
            <person name="Sanders M."/>
            <person name="Saunders D."/>
            <person name="Seeger K."/>
            <person name="Sharp S."/>
            <person name="Simmonds M."/>
            <person name="Skelton J."/>
            <person name="Squares R."/>
            <person name="Squares S."/>
            <person name="Stevens K."/>
            <person name="Unwin L."/>
            <person name="Whitehead S."/>
            <person name="Barrell B.G."/>
            <person name="Maskell D.J."/>
        </authorList>
    </citation>
    <scope>NUCLEOTIDE SEQUENCE [LARGE SCALE GENOMIC DNA]</scope>
    <source>
        <strain>Tohama I / ATCC BAA-589 / NCTC 13251</strain>
    </source>
</reference>
<accession>Q7VTB3</accession>
<organism>
    <name type="scientific">Bordetella pertussis (strain Tohama I / ATCC BAA-589 / NCTC 13251)</name>
    <dbReference type="NCBI Taxonomy" id="257313"/>
    <lineage>
        <taxon>Bacteria</taxon>
        <taxon>Pseudomonadati</taxon>
        <taxon>Pseudomonadota</taxon>
        <taxon>Betaproteobacteria</taxon>
        <taxon>Burkholderiales</taxon>
        <taxon>Alcaligenaceae</taxon>
        <taxon>Bordetella</taxon>
    </lineage>
</organism>
<comment type="subunit">
    <text evidence="1">Part of the 50S ribosomal subunit.</text>
</comment>
<comment type="similarity">
    <text evidence="1">Belongs to the universal ribosomal protein uL30 family.</text>
</comment>
<gene>
    <name evidence="1" type="primary">rpmD</name>
    <name type="ordered locus">BP3634</name>
</gene>